<sequence length="82" mass="9941">MFEKVNRSGLIIYLYYNRDAKKLQDYGDITYHSKKHRYLQLYVPTQEVEQLVGRLSKEKFIKKVRVCHIQELETPFVGNLYR</sequence>
<reference key="1">
    <citation type="journal article" date="2010" name="Genome Biol.">
        <title>Structure and dynamics of the pan-genome of Streptococcus pneumoniae and closely related species.</title>
        <authorList>
            <person name="Donati C."/>
            <person name="Hiller N.L."/>
            <person name="Tettelin H."/>
            <person name="Muzzi A."/>
            <person name="Croucher N.J."/>
            <person name="Angiuoli S.V."/>
            <person name="Oggioni M."/>
            <person name="Dunning Hotopp J.C."/>
            <person name="Hu F.Z."/>
            <person name="Riley D.R."/>
            <person name="Covacci A."/>
            <person name="Mitchell T.J."/>
            <person name="Bentley S.D."/>
            <person name="Kilian M."/>
            <person name="Ehrlich G.D."/>
            <person name="Rappuoli R."/>
            <person name="Moxon E.R."/>
            <person name="Masignani V."/>
        </authorList>
    </citation>
    <scope>NUCLEOTIDE SEQUENCE [LARGE SCALE GENOMIC DNA]</scope>
    <source>
        <strain>Taiwan19F-14</strain>
    </source>
</reference>
<dbReference type="EMBL" id="CP000921">
    <property type="protein sequence ID" value="ACO22381.1"/>
    <property type="molecule type" value="Genomic_DNA"/>
</dbReference>
<dbReference type="RefSeq" id="WP_000462126.1">
    <property type="nucleotide sequence ID" value="NC_012469.1"/>
</dbReference>
<dbReference type="SMR" id="C1CQK9"/>
<dbReference type="KEGG" id="snt:SPT_0762"/>
<dbReference type="HOGENOM" id="CLU_159890_1_0_9"/>
<dbReference type="GO" id="GO:0005737">
    <property type="term" value="C:cytoplasm"/>
    <property type="evidence" value="ECO:0007669"/>
    <property type="project" value="UniProtKB-SubCell"/>
</dbReference>
<dbReference type="HAMAP" id="MF_01126">
    <property type="entry name" value="UPF0298"/>
    <property type="match status" value="1"/>
</dbReference>
<dbReference type="InterPro" id="IPR016979">
    <property type="entry name" value="DUF2129"/>
</dbReference>
<dbReference type="NCBIfam" id="NF002631">
    <property type="entry name" value="PRK02302.1"/>
    <property type="match status" value="1"/>
</dbReference>
<dbReference type="Pfam" id="PF09902">
    <property type="entry name" value="DUF2129"/>
    <property type="match status" value="1"/>
</dbReference>
<dbReference type="PIRSF" id="PIRSF031653">
    <property type="entry name" value="UCP031653"/>
    <property type="match status" value="1"/>
</dbReference>
<name>Y762_STRZT</name>
<gene>
    <name type="ordered locus">SPT_0762</name>
</gene>
<keyword id="KW-0963">Cytoplasm</keyword>
<protein>
    <recommendedName>
        <fullName evidence="1">UPF0298 protein SPT_0762</fullName>
    </recommendedName>
</protein>
<organism>
    <name type="scientific">Streptococcus pneumoniae (strain Taiwan19F-14)</name>
    <dbReference type="NCBI Taxonomy" id="487213"/>
    <lineage>
        <taxon>Bacteria</taxon>
        <taxon>Bacillati</taxon>
        <taxon>Bacillota</taxon>
        <taxon>Bacilli</taxon>
        <taxon>Lactobacillales</taxon>
        <taxon>Streptococcaceae</taxon>
        <taxon>Streptococcus</taxon>
    </lineage>
</organism>
<evidence type="ECO:0000255" key="1">
    <source>
        <dbReference type="HAMAP-Rule" id="MF_01126"/>
    </source>
</evidence>
<proteinExistence type="inferred from homology"/>
<comment type="subcellular location">
    <subcellularLocation>
        <location evidence="1">Cytoplasm</location>
    </subcellularLocation>
</comment>
<comment type="similarity">
    <text evidence="1">Belongs to the UPF0298 family.</text>
</comment>
<feature type="chain" id="PRO_1000164068" description="UPF0298 protein SPT_0762">
    <location>
        <begin position="1"/>
        <end position="82"/>
    </location>
</feature>
<accession>C1CQK9</accession>